<organism>
    <name type="scientific">Burkholderia orbicola (strain AU 1054)</name>
    <dbReference type="NCBI Taxonomy" id="331271"/>
    <lineage>
        <taxon>Bacteria</taxon>
        <taxon>Pseudomonadati</taxon>
        <taxon>Pseudomonadota</taxon>
        <taxon>Betaproteobacteria</taxon>
        <taxon>Burkholderiales</taxon>
        <taxon>Burkholderiaceae</taxon>
        <taxon>Burkholderia</taxon>
        <taxon>Burkholderia cepacia complex</taxon>
        <taxon>Burkholderia orbicola</taxon>
    </lineage>
</organism>
<dbReference type="EC" id="3.5.1.5" evidence="1"/>
<dbReference type="EMBL" id="CP000378">
    <property type="protein sequence ID" value="ABF75335.1"/>
    <property type="molecule type" value="Genomic_DNA"/>
</dbReference>
<dbReference type="SMR" id="Q1BYH0"/>
<dbReference type="HOGENOM" id="CLU_145825_1_0_4"/>
<dbReference type="UniPathway" id="UPA00258">
    <property type="reaction ID" value="UER00370"/>
</dbReference>
<dbReference type="GO" id="GO:0005737">
    <property type="term" value="C:cytoplasm"/>
    <property type="evidence" value="ECO:0007669"/>
    <property type="project" value="UniProtKB-SubCell"/>
</dbReference>
<dbReference type="GO" id="GO:0016151">
    <property type="term" value="F:nickel cation binding"/>
    <property type="evidence" value="ECO:0007669"/>
    <property type="project" value="InterPro"/>
</dbReference>
<dbReference type="GO" id="GO:0009039">
    <property type="term" value="F:urease activity"/>
    <property type="evidence" value="ECO:0007669"/>
    <property type="project" value="UniProtKB-UniRule"/>
</dbReference>
<dbReference type="GO" id="GO:0043419">
    <property type="term" value="P:urea catabolic process"/>
    <property type="evidence" value="ECO:0007669"/>
    <property type="project" value="UniProtKB-UniRule"/>
</dbReference>
<dbReference type="CDD" id="cd00390">
    <property type="entry name" value="Urease_gamma"/>
    <property type="match status" value="1"/>
</dbReference>
<dbReference type="Gene3D" id="3.30.280.10">
    <property type="entry name" value="Urease, gamma-like subunit"/>
    <property type="match status" value="1"/>
</dbReference>
<dbReference type="HAMAP" id="MF_00739">
    <property type="entry name" value="Urease_gamma"/>
    <property type="match status" value="1"/>
</dbReference>
<dbReference type="InterPro" id="IPR012010">
    <property type="entry name" value="Urease_gamma"/>
</dbReference>
<dbReference type="InterPro" id="IPR002026">
    <property type="entry name" value="Urease_gamma/gamma-beta_su"/>
</dbReference>
<dbReference type="InterPro" id="IPR036463">
    <property type="entry name" value="Urease_gamma_sf"/>
</dbReference>
<dbReference type="InterPro" id="IPR050069">
    <property type="entry name" value="Urease_subunit"/>
</dbReference>
<dbReference type="NCBIfam" id="NF009712">
    <property type="entry name" value="PRK13241.1"/>
    <property type="match status" value="1"/>
</dbReference>
<dbReference type="NCBIfam" id="TIGR00193">
    <property type="entry name" value="urease_gam"/>
    <property type="match status" value="1"/>
</dbReference>
<dbReference type="PANTHER" id="PTHR33569">
    <property type="entry name" value="UREASE"/>
    <property type="match status" value="1"/>
</dbReference>
<dbReference type="PANTHER" id="PTHR33569:SF1">
    <property type="entry name" value="UREASE"/>
    <property type="match status" value="1"/>
</dbReference>
<dbReference type="Pfam" id="PF00547">
    <property type="entry name" value="Urease_gamma"/>
    <property type="match status" value="1"/>
</dbReference>
<dbReference type="PIRSF" id="PIRSF001223">
    <property type="entry name" value="Urease_gamma"/>
    <property type="match status" value="1"/>
</dbReference>
<dbReference type="SUPFAM" id="SSF54111">
    <property type="entry name" value="Urease, gamma-subunit"/>
    <property type="match status" value="1"/>
</dbReference>
<protein>
    <recommendedName>
        <fullName evidence="1">Urease subunit gamma</fullName>
        <ecNumber evidence="1">3.5.1.5</ecNumber>
    </recommendedName>
    <alternativeName>
        <fullName evidence="1">Urea amidohydrolase subunit gamma</fullName>
    </alternativeName>
</protein>
<proteinExistence type="inferred from homology"/>
<keyword id="KW-0963">Cytoplasm</keyword>
<keyword id="KW-0378">Hydrolase</keyword>
<reference key="1">
    <citation type="submission" date="2006-05" db="EMBL/GenBank/DDBJ databases">
        <title>Complete sequence of chromosome 1 of Burkholderia cenocepacia AU 1054.</title>
        <authorList>
            <consortium name="US DOE Joint Genome Institute"/>
            <person name="Copeland A."/>
            <person name="Lucas S."/>
            <person name="Lapidus A."/>
            <person name="Barry K."/>
            <person name="Detter J.C."/>
            <person name="Glavina del Rio T."/>
            <person name="Hammon N."/>
            <person name="Israni S."/>
            <person name="Dalin E."/>
            <person name="Tice H."/>
            <person name="Pitluck S."/>
            <person name="Chain P."/>
            <person name="Malfatti S."/>
            <person name="Shin M."/>
            <person name="Vergez L."/>
            <person name="Schmutz J."/>
            <person name="Larimer F."/>
            <person name="Land M."/>
            <person name="Hauser L."/>
            <person name="Kyrpides N."/>
            <person name="Lykidis A."/>
            <person name="LiPuma J.J."/>
            <person name="Konstantinidis K."/>
            <person name="Tiedje J.M."/>
            <person name="Richardson P."/>
        </authorList>
    </citation>
    <scope>NUCLEOTIDE SEQUENCE [LARGE SCALE GENOMIC DNA]</scope>
    <source>
        <strain>AU 1054</strain>
    </source>
</reference>
<sequence length="100" mass="11100">MKLTPREKDKLLIFTAALLAERRRARGLKLNYPEAVAFITAALMEAARDGKTVAEVMHYGTTLLTRDDVMDGVPEMIPDIQVEATFPDGTKLVTVHHPIP</sequence>
<accession>Q1BYH0</accession>
<name>URE3_BURO1</name>
<feature type="chain" id="PRO_1000046312" description="Urease subunit gamma">
    <location>
        <begin position="1"/>
        <end position="100"/>
    </location>
</feature>
<evidence type="ECO:0000255" key="1">
    <source>
        <dbReference type="HAMAP-Rule" id="MF_00739"/>
    </source>
</evidence>
<comment type="catalytic activity">
    <reaction evidence="1">
        <text>urea + 2 H2O + H(+) = hydrogencarbonate + 2 NH4(+)</text>
        <dbReference type="Rhea" id="RHEA:20557"/>
        <dbReference type="ChEBI" id="CHEBI:15377"/>
        <dbReference type="ChEBI" id="CHEBI:15378"/>
        <dbReference type="ChEBI" id="CHEBI:16199"/>
        <dbReference type="ChEBI" id="CHEBI:17544"/>
        <dbReference type="ChEBI" id="CHEBI:28938"/>
        <dbReference type="EC" id="3.5.1.5"/>
    </reaction>
</comment>
<comment type="pathway">
    <text evidence="1">Nitrogen metabolism; urea degradation; CO(2) and NH(3) from urea (urease route): step 1/1.</text>
</comment>
<comment type="subunit">
    <text evidence="1">Heterotrimer of UreA (gamma), UreB (beta) and UreC (alpha) subunits. Three heterotrimers associate to form the active enzyme.</text>
</comment>
<comment type="subcellular location">
    <subcellularLocation>
        <location evidence="1">Cytoplasm</location>
    </subcellularLocation>
</comment>
<comment type="similarity">
    <text evidence="1">Belongs to the urease gamma subunit family.</text>
</comment>
<gene>
    <name evidence="1" type="primary">ureA</name>
    <name type="ordered locus">Bcen_0423</name>
</gene>